<keyword id="KW-0285">Flavoprotein</keyword>
<keyword id="KW-0288">FMN</keyword>
<gene>
    <name type="ordered locus">PYRAB12460</name>
    <name type="ORF">PAB1557</name>
</gene>
<feature type="chain" id="PRO_0000085530" description="Uncharacterized protein PYRAB12460">
    <location>
        <begin position="1"/>
        <end position="172"/>
    </location>
</feature>
<reference key="1">
    <citation type="journal article" date="2003" name="Mol. Microbiol.">
        <title>An integrated analysis of the genome of the hyperthermophilic archaeon Pyrococcus abyssi.</title>
        <authorList>
            <person name="Cohen G.N."/>
            <person name="Barbe V."/>
            <person name="Flament D."/>
            <person name="Galperin M."/>
            <person name="Heilig R."/>
            <person name="Lecompte O."/>
            <person name="Poch O."/>
            <person name="Prieur D."/>
            <person name="Querellou J."/>
            <person name="Ripp R."/>
            <person name="Thierry J.-C."/>
            <person name="Van der Oost J."/>
            <person name="Weissenbach J."/>
            <person name="Zivanovic Y."/>
            <person name="Forterre P."/>
        </authorList>
    </citation>
    <scope>NUCLEOTIDE SEQUENCE [LARGE SCALE GENOMIC DNA]</scope>
    <source>
        <strain>GE5 / Orsay</strain>
    </source>
</reference>
<reference key="2">
    <citation type="journal article" date="2012" name="Curr. Microbiol.">
        <title>Re-annotation of two hyperthermophilic archaea Pyrococcus abyssi GE5 and Pyrococcus furiosus DSM 3638.</title>
        <authorList>
            <person name="Gao J."/>
            <person name="Wang J."/>
        </authorList>
    </citation>
    <scope>GENOME REANNOTATION</scope>
    <source>
        <strain>GE5 / Orsay</strain>
    </source>
</reference>
<name>Y1246_PYRAB</name>
<protein>
    <recommendedName>
        <fullName>Uncharacterized protein PYRAB12460</fullName>
    </recommendedName>
</protein>
<dbReference type="EMBL" id="AJ248287">
    <property type="protein sequence ID" value="CAB50151.1"/>
    <property type="molecule type" value="Genomic_DNA"/>
</dbReference>
<dbReference type="EMBL" id="HE613800">
    <property type="protein sequence ID" value="CCE70681.1"/>
    <property type="molecule type" value="Genomic_DNA"/>
</dbReference>
<dbReference type="PIR" id="B75032">
    <property type="entry name" value="B75032"/>
</dbReference>
<dbReference type="RefSeq" id="WP_010868358.1">
    <property type="nucleotide sequence ID" value="NC_000868.1"/>
</dbReference>
<dbReference type="SMR" id="Q9UZA8"/>
<dbReference type="STRING" id="272844.PAB1557"/>
<dbReference type="KEGG" id="pab:PAB1557"/>
<dbReference type="PATRIC" id="fig|272844.11.peg.1324"/>
<dbReference type="eggNOG" id="arCOG02017">
    <property type="taxonomic scope" value="Archaea"/>
</dbReference>
<dbReference type="HOGENOM" id="CLU_059021_5_3_2"/>
<dbReference type="OrthoDB" id="8522at2157"/>
<dbReference type="PhylomeDB" id="Q9UZA8"/>
<dbReference type="Proteomes" id="UP000000810">
    <property type="component" value="Chromosome"/>
</dbReference>
<dbReference type="Proteomes" id="UP000009139">
    <property type="component" value="Chromosome"/>
</dbReference>
<dbReference type="GO" id="GO:0010181">
    <property type="term" value="F:FMN binding"/>
    <property type="evidence" value="ECO:0007669"/>
    <property type="project" value="InterPro"/>
</dbReference>
<dbReference type="Gene3D" id="2.30.110.10">
    <property type="entry name" value="Electron Transport, Fmn-binding Protein, Chain A"/>
    <property type="match status" value="1"/>
</dbReference>
<dbReference type="InterPro" id="IPR002563">
    <property type="entry name" value="Flavin_Rdtase-like_dom"/>
</dbReference>
<dbReference type="InterPro" id="IPR052174">
    <property type="entry name" value="Flavoredoxin"/>
</dbReference>
<dbReference type="InterPro" id="IPR012349">
    <property type="entry name" value="Split_barrel_FMN-bd"/>
</dbReference>
<dbReference type="PANTHER" id="PTHR43567:SF1">
    <property type="entry name" value="FLAVOREDOXIN"/>
    <property type="match status" value="1"/>
</dbReference>
<dbReference type="PANTHER" id="PTHR43567">
    <property type="entry name" value="FLAVOREDOXIN-RELATED-RELATED"/>
    <property type="match status" value="1"/>
</dbReference>
<dbReference type="Pfam" id="PF01613">
    <property type="entry name" value="Flavin_Reduct"/>
    <property type="match status" value="1"/>
</dbReference>
<dbReference type="SMART" id="SM00903">
    <property type="entry name" value="Flavin_Reduct"/>
    <property type="match status" value="1"/>
</dbReference>
<dbReference type="SUPFAM" id="SSF50475">
    <property type="entry name" value="FMN-binding split barrel"/>
    <property type="match status" value="1"/>
</dbReference>
<proteinExistence type="inferred from homology"/>
<comment type="cofactor">
    <cofactor evidence="1">
        <name>FMN</name>
        <dbReference type="ChEBI" id="CHEBI:58210"/>
    </cofactor>
</comment>
<comment type="similarity">
    <text evidence="2">Belongs to the flavoredoxin family.</text>
</comment>
<accession>Q9UZA8</accession>
<accession>G8ZKN8</accession>
<evidence type="ECO:0000250" key="1"/>
<evidence type="ECO:0000305" key="2"/>
<organism>
    <name type="scientific">Pyrococcus abyssi (strain GE5 / Orsay)</name>
    <dbReference type="NCBI Taxonomy" id="272844"/>
    <lineage>
        <taxon>Archaea</taxon>
        <taxon>Methanobacteriati</taxon>
        <taxon>Methanobacteriota</taxon>
        <taxon>Thermococci</taxon>
        <taxon>Thermococcales</taxon>
        <taxon>Thermococcaceae</taxon>
        <taxon>Pyrococcus</taxon>
    </lineage>
</organism>
<sequence length="172" mass="19535">MEGYRLLYPMRTYLVVSGHGDEANVMAADWVTVLSFDPFMVGVAIAPKRTTHKLIKKYNEFVISVPSLEMLRDVWIAGTKKGPSKLKDMGITLVPSRKVKVPSIKEALANIECEVYDTKDYGDHTLFVGKVLAYTYKEEAFEGGKPNLKFNFLAHVSWSEFVTFQDKIYRAE</sequence>